<reference key="1">
    <citation type="journal article" date="2006" name="Nat. Biotechnol.">
        <title>The genome and transcriptomes of the anti-tumor agent Clostridium novyi-NT.</title>
        <authorList>
            <person name="Bettegowda C."/>
            <person name="Huang X."/>
            <person name="Lin J."/>
            <person name="Cheong I."/>
            <person name="Kohli M."/>
            <person name="Szabo S.A."/>
            <person name="Zhang X."/>
            <person name="Diaz L.A. Jr."/>
            <person name="Velculescu V.E."/>
            <person name="Parmigiani G."/>
            <person name="Kinzler K.W."/>
            <person name="Vogelstein B."/>
            <person name="Zhou S."/>
        </authorList>
    </citation>
    <scope>NUCLEOTIDE SEQUENCE [LARGE SCALE GENOMIC DNA]</scope>
    <source>
        <strain>NT</strain>
    </source>
</reference>
<name>MRAY_CLONN</name>
<accession>A0Q060</accession>
<sequence length="325" mass="35499">MSLMIYSVLVAFVVSLIQGPILIPLLHKFKFGQNIRSEGPESHKKKSGTPTMGGVIFIISSVITVFVVSRHPSFETKLAIFAFVAFGIIGLIDDSLKIIHKENEGLKAYQKMILLLIVSSIIGFYAYNNPRIGSEIIVPFVHKTWNLGMFYIPFIIFYFAATTNAVNLTDGLDGLATSITLLVMTFFAVVSYATGNYNLAVFCSIVAGALLGFLKYNAYPAQVFMGDTGSLALGGVVGAVAMMLKLPLIVIIVGGIYLAEALSVILQVGSFKLRGKRIFKMSPIHHHFELSGWHETKIVSIFSIITVILCLIGFLSLIKMNGFSL</sequence>
<proteinExistence type="inferred from homology"/>
<comment type="function">
    <text evidence="1">Catalyzes the initial step of the lipid cycle reactions in the biosynthesis of the cell wall peptidoglycan: transfers peptidoglycan precursor phospho-MurNAc-pentapeptide from UDP-MurNAc-pentapeptide onto the lipid carrier undecaprenyl phosphate, yielding undecaprenyl-pyrophosphoryl-MurNAc-pentapeptide, known as lipid I.</text>
</comment>
<comment type="catalytic activity">
    <reaction evidence="1">
        <text>UDP-N-acetyl-alpha-D-muramoyl-L-alanyl-gamma-D-glutamyl-meso-2,6-diaminopimeloyl-D-alanyl-D-alanine + di-trans,octa-cis-undecaprenyl phosphate = di-trans,octa-cis-undecaprenyl diphospho-N-acetyl-alpha-D-muramoyl-L-alanyl-D-glutamyl-meso-2,6-diaminopimeloyl-D-alanyl-D-alanine + UMP</text>
        <dbReference type="Rhea" id="RHEA:28386"/>
        <dbReference type="ChEBI" id="CHEBI:57865"/>
        <dbReference type="ChEBI" id="CHEBI:60392"/>
        <dbReference type="ChEBI" id="CHEBI:61386"/>
        <dbReference type="ChEBI" id="CHEBI:61387"/>
        <dbReference type="EC" id="2.7.8.13"/>
    </reaction>
</comment>
<comment type="cofactor">
    <cofactor evidence="1">
        <name>Mg(2+)</name>
        <dbReference type="ChEBI" id="CHEBI:18420"/>
    </cofactor>
</comment>
<comment type="pathway">
    <text evidence="1">Cell wall biogenesis; peptidoglycan biosynthesis.</text>
</comment>
<comment type="subcellular location">
    <subcellularLocation>
        <location evidence="1">Cell membrane</location>
        <topology evidence="1">Multi-pass membrane protein</topology>
    </subcellularLocation>
</comment>
<comment type="similarity">
    <text evidence="1">Belongs to the glycosyltransferase 4 family. MraY subfamily.</text>
</comment>
<keyword id="KW-0131">Cell cycle</keyword>
<keyword id="KW-0132">Cell division</keyword>
<keyword id="KW-1003">Cell membrane</keyword>
<keyword id="KW-0133">Cell shape</keyword>
<keyword id="KW-0961">Cell wall biogenesis/degradation</keyword>
<keyword id="KW-0460">Magnesium</keyword>
<keyword id="KW-0472">Membrane</keyword>
<keyword id="KW-0479">Metal-binding</keyword>
<keyword id="KW-0573">Peptidoglycan synthesis</keyword>
<keyword id="KW-1185">Reference proteome</keyword>
<keyword id="KW-0808">Transferase</keyword>
<keyword id="KW-0812">Transmembrane</keyword>
<keyword id="KW-1133">Transmembrane helix</keyword>
<organism>
    <name type="scientific">Clostridium novyi (strain NT)</name>
    <dbReference type="NCBI Taxonomy" id="386415"/>
    <lineage>
        <taxon>Bacteria</taxon>
        <taxon>Bacillati</taxon>
        <taxon>Bacillota</taxon>
        <taxon>Clostridia</taxon>
        <taxon>Eubacteriales</taxon>
        <taxon>Clostridiaceae</taxon>
        <taxon>Clostridium</taxon>
    </lineage>
</organism>
<dbReference type="EC" id="2.7.8.13" evidence="1"/>
<dbReference type="EMBL" id="CP000382">
    <property type="protein sequence ID" value="ABK61653.1"/>
    <property type="molecule type" value="Genomic_DNA"/>
</dbReference>
<dbReference type="RefSeq" id="WP_011722016.1">
    <property type="nucleotide sequence ID" value="NC_008593.1"/>
</dbReference>
<dbReference type="SMR" id="A0Q060"/>
<dbReference type="STRING" id="386415.NT01CX_1939"/>
<dbReference type="KEGG" id="cno:NT01CX_1939"/>
<dbReference type="PATRIC" id="fig|386415.7.peg.1041"/>
<dbReference type="eggNOG" id="COG0472">
    <property type="taxonomic scope" value="Bacteria"/>
</dbReference>
<dbReference type="HOGENOM" id="CLU_023982_0_1_9"/>
<dbReference type="UniPathway" id="UPA00219"/>
<dbReference type="Proteomes" id="UP000008220">
    <property type="component" value="Chromosome"/>
</dbReference>
<dbReference type="GO" id="GO:0005886">
    <property type="term" value="C:plasma membrane"/>
    <property type="evidence" value="ECO:0007669"/>
    <property type="project" value="UniProtKB-SubCell"/>
</dbReference>
<dbReference type="GO" id="GO:0046872">
    <property type="term" value="F:metal ion binding"/>
    <property type="evidence" value="ECO:0007669"/>
    <property type="project" value="UniProtKB-KW"/>
</dbReference>
<dbReference type="GO" id="GO:0008963">
    <property type="term" value="F:phospho-N-acetylmuramoyl-pentapeptide-transferase activity"/>
    <property type="evidence" value="ECO:0007669"/>
    <property type="project" value="UniProtKB-UniRule"/>
</dbReference>
<dbReference type="GO" id="GO:0051992">
    <property type="term" value="F:UDP-N-acetylmuramoyl-L-alanyl-D-glutamyl-meso-2,6-diaminopimelyl-D-alanyl-D-alanine:undecaprenyl-phosphate transferase activity"/>
    <property type="evidence" value="ECO:0007669"/>
    <property type="project" value="RHEA"/>
</dbReference>
<dbReference type="GO" id="GO:0051301">
    <property type="term" value="P:cell division"/>
    <property type="evidence" value="ECO:0007669"/>
    <property type="project" value="UniProtKB-KW"/>
</dbReference>
<dbReference type="GO" id="GO:0071555">
    <property type="term" value="P:cell wall organization"/>
    <property type="evidence" value="ECO:0007669"/>
    <property type="project" value="UniProtKB-KW"/>
</dbReference>
<dbReference type="GO" id="GO:0009252">
    <property type="term" value="P:peptidoglycan biosynthetic process"/>
    <property type="evidence" value="ECO:0007669"/>
    <property type="project" value="UniProtKB-UniRule"/>
</dbReference>
<dbReference type="GO" id="GO:0008360">
    <property type="term" value="P:regulation of cell shape"/>
    <property type="evidence" value="ECO:0007669"/>
    <property type="project" value="UniProtKB-KW"/>
</dbReference>
<dbReference type="CDD" id="cd06852">
    <property type="entry name" value="GT_MraY"/>
    <property type="match status" value="1"/>
</dbReference>
<dbReference type="HAMAP" id="MF_00038">
    <property type="entry name" value="MraY"/>
    <property type="match status" value="1"/>
</dbReference>
<dbReference type="InterPro" id="IPR000715">
    <property type="entry name" value="Glycosyl_transferase_4"/>
</dbReference>
<dbReference type="InterPro" id="IPR003524">
    <property type="entry name" value="PNAcMuramoyl-5peptid_Trfase"/>
</dbReference>
<dbReference type="InterPro" id="IPR018480">
    <property type="entry name" value="PNAcMuramoyl-5peptid_Trfase_CS"/>
</dbReference>
<dbReference type="NCBIfam" id="TIGR00445">
    <property type="entry name" value="mraY"/>
    <property type="match status" value="1"/>
</dbReference>
<dbReference type="PANTHER" id="PTHR22926">
    <property type="entry name" value="PHOSPHO-N-ACETYLMURAMOYL-PENTAPEPTIDE-TRANSFERASE"/>
    <property type="match status" value="1"/>
</dbReference>
<dbReference type="PANTHER" id="PTHR22926:SF5">
    <property type="entry name" value="PHOSPHO-N-ACETYLMURAMOYL-PENTAPEPTIDE-TRANSFERASE HOMOLOG"/>
    <property type="match status" value="1"/>
</dbReference>
<dbReference type="Pfam" id="PF00953">
    <property type="entry name" value="Glycos_transf_4"/>
    <property type="match status" value="1"/>
</dbReference>
<dbReference type="Pfam" id="PF10555">
    <property type="entry name" value="MraY_sig1"/>
    <property type="match status" value="1"/>
</dbReference>
<dbReference type="PROSITE" id="PS01347">
    <property type="entry name" value="MRAY_1"/>
    <property type="match status" value="1"/>
</dbReference>
<dbReference type="PROSITE" id="PS01348">
    <property type="entry name" value="MRAY_2"/>
    <property type="match status" value="1"/>
</dbReference>
<feature type="chain" id="PRO_1000002963" description="Phospho-N-acetylmuramoyl-pentapeptide-transferase">
    <location>
        <begin position="1"/>
        <end position="325"/>
    </location>
</feature>
<feature type="transmembrane region" description="Helical" evidence="1">
    <location>
        <begin position="3"/>
        <end position="23"/>
    </location>
</feature>
<feature type="transmembrane region" description="Helical" evidence="1">
    <location>
        <begin position="48"/>
        <end position="68"/>
    </location>
</feature>
<feature type="transmembrane region" description="Helical" evidence="1">
    <location>
        <begin position="79"/>
        <end position="99"/>
    </location>
</feature>
<feature type="transmembrane region" description="Helical" evidence="1">
    <location>
        <begin position="106"/>
        <end position="126"/>
    </location>
</feature>
<feature type="transmembrane region" description="Helical" evidence="1">
    <location>
        <begin position="136"/>
        <end position="156"/>
    </location>
</feature>
<feature type="transmembrane region" description="Helical" evidence="1">
    <location>
        <begin position="174"/>
        <end position="194"/>
    </location>
</feature>
<feature type="transmembrane region" description="Helical" evidence="1">
    <location>
        <begin position="199"/>
        <end position="219"/>
    </location>
</feature>
<feature type="transmembrane region" description="Helical" evidence="1">
    <location>
        <begin position="223"/>
        <end position="243"/>
    </location>
</feature>
<feature type="transmembrane region" description="Helical" evidence="1">
    <location>
        <begin position="246"/>
        <end position="266"/>
    </location>
</feature>
<feature type="transmembrane region" description="Helical" evidence="1">
    <location>
        <begin position="298"/>
        <end position="318"/>
    </location>
</feature>
<evidence type="ECO:0000255" key="1">
    <source>
        <dbReference type="HAMAP-Rule" id="MF_00038"/>
    </source>
</evidence>
<gene>
    <name evidence="1" type="primary">mraY</name>
    <name type="ordered locus">NT01CX_1939</name>
</gene>
<protein>
    <recommendedName>
        <fullName evidence="1">Phospho-N-acetylmuramoyl-pentapeptide-transferase</fullName>
        <ecNumber evidence="1">2.7.8.13</ecNumber>
    </recommendedName>
    <alternativeName>
        <fullName evidence="1">UDP-MurNAc-pentapeptide phosphotransferase</fullName>
    </alternativeName>
</protein>